<keyword id="KW-0749">Sporulation</keyword>
<reference key="1">
    <citation type="submission" date="2007-06" db="EMBL/GenBank/DDBJ databases">
        <title>Complete sequence of Clostridium beijerinckii NCIMB 8052.</title>
        <authorList>
            <consortium name="US DOE Joint Genome Institute"/>
            <person name="Copeland A."/>
            <person name="Lucas S."/>
            <person name="Lapidus A."/>
            <person name="Barry K."/>
            <person name="Detter J.C."/>
            <person name="Glavina del Rio T."/>
            <person name="Hammon N."/>
            <person name="Israni S."/>
            <person name="Dalin E."/>
            <person name="Tice H."/>
            <person name="Pitluck S."/>
            <person name="Sims D."/>
            <person name="Brettin T."/>
            <person name="Bruce D."/>
            <person name="Tapia R."/>
            <person name="Brainard J."/>
            <person name="Schmutz J."/>
            <person name="Larimer F."/>
            <person name="Land M."/>
            <person name="Hauser L."/>
            <person name="Kyrpides N."/>
            <person name="Mikhailova N."/>
            <person name="Bennet G."/>
            <person name="Cann I."/>
            <person name="Chen J.-S."/>
            <person name="Contreras A.L."/>
            <person name="Jones D."/>
            <person name="Kashket E."/>
            <person name="Mitchell W."/>
            <person name="Stoddard S."/>
            <person name="Schwarz W."/>
            <person name="Qureshi N."/>
            <person name="Young M."/>
            <person name="Shi Z."/>
            <person name="Ezeji T."/>
            <person name="White B."/>
            <person name="Blaschek H."/>
            <person name="Richardson P."/>
        </authorList>
    </citation>
    <scope>NUCLEOTIDE SEQUENCE [LARGE SCALE GENOMIC DNA]</scope>
    <source>
        <strain>ATCC 51743 / NCIMB 8052</strain>
    </source>
</reference>
<gene>
    <name type="primary">sspH</name>
    <name type="ordered locus">Cbei_3970</name>
</gene>
<sequence>MDKERAQEIVSSSVMPNVTLNGTPIYIESVNTNTETANIHFLKIQKIHAKCL</sequence>
<organism>
    <name type="scientific">Clostridium beijerinckii (strain ATCC 51743 / NCIMB 8052)</name>
    <name type="common">Clostridium acetobutylicum</name>
    <dbReference type="NCBI Taxonomy" id="290402"/>
    <lineage>
        <taxon>Bacteria</taxon>
        <taxon>Bacillati</taxon>
        <taxon>Bacillota</taxon>
        <taxon>Clostridia</taxon>
        <taxon>Eubacteriales</taxon>
        <taxon>Clostridiaceae</taxon>
        <taxon>Clostridium</taxon>
    </lineage>
</organism>
<proteinExistence type="inferred from homology"/>
<comment type="subcellular location">
    <subcellularLocation>
        <location evidence="1">Spore core</location>
    </subcellularLocation>
</comment>
<comment type="similarity">
    <text evidence="2">Belongs to the SspH family.</text>
</comment>
<protein>
    <recommendedName>
        <fullName>Small, acid-soluble spore protein H</fullName>
        <shortName>SASP H</shortName>
    </recommendedName>
</protein>
<dbReference type="EMBL" id="CP000721">
    <property type="protein sequence ID" value="ABR36080.1"/>
    <property type="molecule type" value="Genomic_DNA"/>
</dbReference>
<dbReference type="RefSeq" id="WP_012060128.1">
    <property type="nucleotide sequence ID" value="NC_009617.1"/>
</dbReference>
<dbReference type="KEGG" id="cbe:Cbei_3970"/>
<dbReference type="HOGENOM" id="CLU_191960_1_0_9"/>
<dbReference type="Proteomes" id="UP000000565">
    <property type="component" value="Chromosome"/>
</dbReference>
<dbReference type="GO" id="GO:0042601">
    <property type="term" value="C:endospore-forming forespore"/>
    <property type="evidence" value="ECO:0007669"/>
    <property type="project" value="InterPro"/>
</dbReference>
<dbReference type="GO" id="GO:0030436">
    <property type="term" value="P:asexual sporulation"/>
    <property type="evidence" value="ECO:0007669"/>
    <property type="project" value="InterPro"/>
</dbReference>
<dbReference type="GO" id="GO:0030435">
    <property type="term" value="P:sporulation resulting in formation of a cellular spore"/>
    <property type="evidence" value="ECO:0007669"/>
    <property type="project" value="UniProtKB-KW"/>
</dbReference>
<dbReference type="InterPro" id="IPR012610">
    <property type="entry name" value="SASP_SspH"/>
</dbReference>
<dbReference type="NCBIfam" id="TIGR02861">
    <property type="entry name" value="SASP_H"/>
    <property type="match status" value="1"/>
</dbReference>
<dbReference type="Pfam" id="PF08141">
    <property type="entry name" value="SspH"/>
    <property type="match status" value="1"/>
</dbReference>
<name>SSPH_CLOB8</name>
<evidence type="ECO:0000250" key="1"/>
<evidence type="ECO:0000305" key="2"/>
<feature type="chain" id="PRO_0000329125" description="Small, acid-soluble spore protein H">
    <location>
        <begin position="1"/>
        <end position="52"/>
    </location>
</feature>
<accession>A6M0F0</accession>